<accession>Q9B5Q9</accession>
<dbReference type="EMBL" id="AF153897">
    <property type="protein sequence ID" value="AAK26685.1"/>
    <property type="molecule type" value="Genomic_DNA"/>
</dbReference>
<dbReference type="SMR" id="Q9B5Q9"/>
<dbReference type="GO" id="GO:0005743">
    <property type="term" value="C:mitochondrial inner membrane"/>
    <property type="evidence" value="ECO:0007669"/>
    <property type="project" value="UniProtKB-SubCell"/>
</dbReference>
<dbReference type="GO" id="GO:0045275">
    <property type="term" value="C:respiratory chain complex III"/>
    <property type="evidence" value="ECO:0007669"/>
    <property type="project" value="InterPro"/>
</dbReference>
<dbReference type="GO" id="GO:0046872">
    <property type="term" value="F:metal ion binding"/>
    <property type="evidence" value="ECO:0007669"/>
    <property type="project" value="UniProtKB-KW"/>
</dbReference>
<dbReference type="GO" id="GO:0008121">
    <property type="term" value="F:ubiquinol-cytochrome-c reductase activity"/>
    <property type="evidence" value="ECO:0007669"/>
    <property type="project" value="InterPro"/>
</dbReference>
<dbReference type="GO" id="GO:0006122">
    <property type="term" value="P:mitochondrial electron transport, ubiquinol to cytochrome c"/>
    <property type="evidence" value="ECO:0007669"/>
    <property type="project" value="TreeGrafter"/>
</dbReference>
<dbReference type="CDD" id="cd00290">
    <property type="entry name" value="cytochrome_b_C"/>
    <property type="match status" value="1"/>
</dbReference>
<dbReference type="CDD" id="cd00284">
    <property type="entry name" value="Cytochrome_b_N"/>
    <property type="match status" value="1"/>
</dbReference>
<dbReference type="FunFam" id="1.20.810.10:FF:000002">
    <property type="entry name" value="Cytochrome b"/>
    <property type="match status" value="1"/>
</dbReference>
<dbReference type="Gene3D" id="1.20.810.10">
    <property type="entry name" value="Cytochrome Bc1 Complex, Chain C"/>
    <property type="match status" value="1"/>
</dbReference>
<dbReference type="InterPro" id="IPR005798">
    <property type="entry name" value="Cyt_b/b6_C"/>
</dbReference>
<dbReference type="InterPro" id="IPR036150">
    <property type="entry name" value="Cyt_b/b6_C_sf"/>
</dbReference>
<dbReference type="InterPro" id="IPR005797">
    <property type="entry name" value="Cyt_b/b6_N"/>
</dbReference>
<dbReference type="InterPro" id="IPR027387">
    <property type="entry name" value="Cytb/b6-like_sf"/>
</dbReference>
<dbReference type="InterPro" id="IPR030689">
    <property type="entry name" value="Cytochrome_b"/>
</dbReference>
<dbReference type="InterPro" id="IPR048260">
    <property type="entry name" value="Cytochrome_b_C_euk/bac"/>
</dbReference>
<dbReference type="InterPro" id="IPR048259">
    <property type="entry name" value="Cytochrome_b_N_euk/bac"/>
</dbReference>
<dbReference type="InterPro" id="IPR016174">
    <property type="entry name" value="Di-haem_cyt_TM"/>
</dbReference>
<dbReference type="PANTHER" id="PTHR19271">
    <property type="entry name" value="CYTOCHROME B"/>
    <property type="match status" value="1"/>
</dbReference>
<dbReference type="PANTHER" id="PTHR19271:SF16">
    <property type="entry name" value="CYTOCHROME B"/>
    <property type="match status" value="1"/>
</dbReference>
<dbReference type="Pfam" id="PF00032">
    <property type="entry name" value="Cytochrom_B_C"/>
    <property type="match status" value="1"/>
</dbReference>
<dbReference type="Pfam" id="PF00033">
    <property type="entry name" value="Cytochrome_B"/>
    <property type="match status" value="1"/>
</dbReference>
<dbReference type="PIRSF" id="PIRSF038885">
    <property type="entry name" value="COB"/>
    <property type="match status" value="1"/>
</dbReference>
<dbReference type="SUPFAM" id="SSF81648">
    <property type="entry name" value="a domain/subunit of cytochrome bc1 complex (Ubiquinol-cytochrome c reductase)"/>
    <property type="match status" value="1"/>
</dbReference>
<dbReference type="SUPFAM" id="SSF81342">
    <property type="entry name" value="Transmembrane di-heme cytochromes"/>
    <property type="match status" value="1"/>
</dbReference>
<dbReference type="PROSITE" id="PS51003">
    <property type="entry name" value="CYTB_CTER"/>
    <property type="match status" value="1"/>
</dbReference>
<dbReference type="PROSITE" id="PS51002">
    <property type="entry name" value="CYTB_NTER"/>
    <property type="match status" value="1"/>
</dbReference>
<comment type="function">
    <text evidence="2">Component of the ubiquinol-cytochrome c reductase complex (complex III or cytochrome b-c1 complex) that is part of the mitochondrial respiratory chain. The b-c1 complex mediates electron transfer from ubiquinol to cytochrome c. Contributes to the generation of a proton gradient across the mitochondrial membrane that is then used for ATP synthesis.</text>
</comment>
<comment type="cofactor">
    <cofactor evidence="2">
        <name>heme b</name>
        <dbReference type="ChEBI" id="CHEBI:60344"/>
    </cofactor>
    <text evidence="2">Binds 2 heme b groups non-covalently.</text>
</comment>
<comment type="subunit">
    <text evidence="2">The cytochrome bc1 complex contains 11 subunits: 3 respiratory subunits (MT-CYB, CYC1 and UQCRFS1), 2 core proteins (UQCRC1 and UQCRC2) and 6 low-molecular weight proteins (UQCRH/QCR6, UQCRB/QCR7, UQCRQ/QCR8, UQCR10/QCR9, UQCR11/QCR10 and a cleavage product of UQCRFS1). This cytochrome bc1 complex then forms a dimer.</text>
</comment>
<comment type="subcellular location">
    <subcellularLocation>
        <location evidence="2">Mitochondrion inner membrane</location>
        <topology evidence="2">Multi-pass membrane protein</topology>
    </subcellularLocation>
</comment>
<comment type="miscellaneous">
    <text evidence="1">Heme 1 (or BL or b562) is low-potential and absorbs at about 562 nm, and heme 2 (or BH or b566) is high-potential and absorbs at about 566 nm.</text>
</comment>
<comment type="similarity">
    <text evidence="3 4">Belongs to the cytochrome b family.</text>
</comment>
<comment type="caution">
    <text evidence="2">The full-length protein contains only eight transmembrane helices, not nine as predicted by bioinformatics tools.</text>
</comment>
<organism>
    <name type="scientific">Cephalophorus ogilbyi</name>
    <name type="common">Ogilby's duiker</name>
    <name type="synonym">Cephalophus ogilbyi</name>
    <dbReference type="NCBI Taxonomy" id="129228"/>
    <lineage>
        <taxon>Eukaryota</taxon>
        <taxon>Metazoa</taxon>
        <taxon>Chordata</taxon>
        <taxon>Craniata</taxon>
        <taxon>Vertebrata</taxon>
        <taxon>Euteleostomi</taxon>
        <taxon>Mammalia</taxon>
        <taxon>Eutheria</taxon>
        <taxon>Laurasiatheria</taxon>
        <taxon>Artiodactyla</taxon>
        <taxon>Ruminantia</taxon>
        <taxon>Pecora</taxon>
        <taxon>Bovidae</taxon>
        <taxon>Cephalophinae</taxon>
        <taxon>Cephalophorus</taxon>
    </lineage>
</organism>
<feature type="chain" id="PRO_0000254672" description="Cytochrome b">
    <location>
        <begin position="1"/>
        <end position="379"/>
    </location>
</feature>
<feature type="transmembrane region" description="Helical" evidence="2">
    <location>
        <begin position="33"/>
        <end position="53"/>
    </location>
</feature>
<feature type="transmembrane region" description="Helical" evidence="2">
    <location>
        <begin position="77"/>
        <end position="98"/>
    </location>
</feature>
<feature type="transmembrane region" description="Helical" evidence="2">
    <location>
        <begin position="113"/>
        <end position="133"/>
    </location>
</feature>
<feature type="transmembrane region" description="Helical" evidence="2">
    <location>
        <begin position="178"/>
        <end position="198"/>
    </location>
</feature>
<feature type="transmembrane region" description="Helical" evidence="2">
    <location>
        <begin position="226"/>
        <end position="246"/>
    </location>
</feature>
<feature type="transmembrane region" description="Helical" evidence="2">
    <location>
        <begin position="288"/>
        <end position="308"/>
    </location>
</feature>
<feature type="transmembrane region" description="Helical" evidence="2">
    <location>
        <begin position="320"/>
        <end position="340"/>
    </location>
</feature>
<feature type="transmembrane region" description="Helical" evidence="2">
    <location>
        <begin position="347"/>
        <end position="367"/>
    </location>
</feature>
<feature type="binding site" description="axial binding residue" evidence="2">
    <location>
        <position position="83"/>
    </location>
    <ligand>
        <name>heme b</name>
        <dbReference type="ChEBI" id="CHEBI:60344"/>
        <label>b562</label>
    </ligand>
    <ligandPart>
        <name>Fe</name>
        <dbReference type="ChEBI" id="CHEBI:18248"/>
    </ligandPart>
</feature>
<feature type="binding site" description="axial binding residue" evidence="2">
    <location>
        <position position="97"/>
    </location>
    <ligand>
        <name>heme b</name>
        <dbReference type="ChEBI" id="CHEBI:60344"/>
        <label>b566</label>
    </ligand>
    <ligandPart>
        <name>Fe</name>
        <dbReference type="ChEBI" id="CHEBI:18248"/>
    </ligandPart>
</feature>
<feature type="binding site" description="axial binding residue" evidence="2">
    <location>
        <position position="182"/>
    </location>
    <ligand>
        <name>heme b</name>
        <dbReference type="ChEBI" id="CHEBI:60344"/>
        <label>b562</label>
    </ligand>
    <ligandPart>
        <name>Fe</name>
        <dbReference type="ChEBI" id="CHEBI:18248"/>
    </ligandPart>
</feature>
<feature type="binding site" description="axial binding residue" evidence="2">
    <location>
        <position position="196"/>
    </location>
    <ligand>
        <name>heme b</name>
        <dbReference type="ChEBI" id="CHEBI:60344"/>
        <label>b566</label>
    </ligand>
    <ligandPart>
        <name>Fe</name>
        <dbReference type="ChEBI" id="CHEBI:18248"/>
    </ligandPart>
</feature>
<feature type="binding site" evidence="2">
    <location>
        <position position="201"/>
    </location>
    <ligand>
        <name>a ubiquinone</name>
        <dbReference type="ChEBI" id="CHEBI:16389"/>
    </ligand>
</feature>
<geneLocation type="mitochondrion"/>
<gene>
    <name type="primary">MT-CYB</name>
    <name type="synonym">COB</name>
    <name type="synonym">CYTB</name>
    <name type="synonym">MTCYB</name>
</gene>
<sequence length="379" mass="42697">MTNIRKTHPLLKIVNNAFIDLPAPSNISSWWNFGSLLGICLVLQILTGLFLAMHYTADTTTAFSSVTHICRDVNYGWIIRYMHANGASMFFICLFMHVGRGLYYGSYAYMETWNIGVILLFATMATAFMGYVLPWGQMSFWGATVITNLLSAIPYIGTNLVEWIWGGFSVDKATLTRFFAFHFIFPFIIAALAMVHLLFLHETGSNNPTGISSDADKIPFHPYYTIKDILGALLLILVLMTLVLFSPDLLGDPDNYPPANPLNTPPHIKPEWYFLFAYAILRSIPNKLGGVLALVLSILILVLMPLLHTSKQRSMMFRPISQCLFWILVADLLTLTWIGGQPVEHPYIIIGQLASIMYFLLILVLMPMASTIENNLLKW</sequence>
<evidence type="ECO:0000250" key="1"/>
<evidence type="ECO:0000250" key="2">
    <source>
        <dbReference type="UniProtKB" id="P00157"/>
    </source>
</evidence>
<evidence type="ECO:0000255" key="3">
    <source>
        <dbReference type="PROSITE-ProRule" id="PRU00967"/>
    </source>
</evidence>
<evidence type="ECO:0000255" key="4">
    <source>
        <dbReference type="PROSITE-ProRule" id="PRU00968"/>
    </source>
</evidence>
<keyword id="KW-0249">Electron transport</keyword>
<keyword id="KW-0349">Heme</keyword>
<keyword id="KW-0408">Iron</keyword>
<keyword id="KW-0472">Membrane</keyword>
<keyword id="KW-0479">Metal-binding</keyword>
<keyword id="KW-0496">Mitochondrion</keyword>
<keyword id="KW-0999">Mitochondrion inner membrane</keyword>
<keyword id="KW-0679">Respiratory chain</keyword>
<keyword id="KW-0812">Transmembrane</keyword>
<keyword id="KW-1133">Transmembrane helix</keyword>
<keyword id="KW-0813">Transport</keyword>
<keyword id="KW-0830">Ubiquinone</keyword>
<name>CYB_CEPOG</name>
<proteinExistence type="inferred from homology"/>
<protein>
    <recommendedName>
        <fullName>Cytochrome b</fullName>
    </recommendedName>
    <alternativeName>
        <fullName>Complex III subunit 3</fullName>
    </alternativeName>
    <alternativeName>
        <fullName>Complex III subunit III</fullName>
    </alternativeName>
    <alternativeName>
        <fullName>Cytochrome b-c1 complex subunit 3</fullName>
    </alternativeName>
    <alternativeName>
        <fullName>Ubiquinol-cytochrome-c reductase complex cytochrome b subunit</fullName>
    </alternativeName>
</protein>
<reference key="1">
    <citation type="journal article" date="2001" name="Mol. Phylogenet. Evol.">
        <title>Retrieval of four adaptive lineages in duiker antelope: evidence from mitochondrial DNA sequences and fluorescence in situ hybridization.</title>
        <authorList>
            <person name="van Vuuren B.J."/>
            <person name="Robinson T.J."/>
        </authorList>
    </citation>
    <scope>NUCLEOTIDE SEQUENCE [GENOMIC DNA]</scope>
</reference>